<organism>
    <name type="scientific">Saccharomyces cerevisiae (strain ATCC 204508 / S288c)</name>
    <name type="common">Baker's yeast</name>
    <dbReference type="NCBI Taxonomy" id="559292"/>
    <lineage>
        <taxon>Eukaryota</taxon>
        <taxon>Fungi</taxon>
        <taxon>Dikarya</taxon>
        <taxon>Ascomycota</taxon>
        <taxon>Saccharomycotina</taxon>
        <taxon>Saccharomycetes</taxon>
        <taxon>Saccharomycetales</taxon>
        <taxon>Saccharomycetaceae</taxon>
        <taxon>Saccharomyces</taxon>
    </lineage>
</organism>
<sequence length="440" mass="48993">MESQQLSQHSHISHGSACASVTSKEVHTNQDPLDVSASKTEECEKASTKANSQQTTTPASSAVPENPHHASPQPASVPPPQNGPYPQQCMMTQNQANPSGWSFYGHPSMIPYTPYQMSPMYFPPGPQSQFPQYPSSVGTPLSTPSPESGNTFTDSSSADSDMTSTKKYVRPPPMLTSPNDFPNWVKTYIKFLQNSNLGGIIPTVNGKPVRQITDDELTFLYNTFQIFAPSQFLPTWVKDILSVDYTDIMKILSKSIEKMQSDTQEANDIVTLANLQYNGSTPADAFETKVTNIIDRLNNNGIHINNKVACQLIMRGLSGEYKFLRYTRHRHLNMTVAELFLDIHAIYEEQQGSRNSKPNYRRNLSDEKNDSRSYTNTTKPKVIARNPQKTNNSKSKTARAHNVSTSNNSPSTDNDSISKSTTEPIQLNNKHDLHLRPGTY</sequence>
<evidence type="ECO:0000250" key="1"/>
<evidence type="ECO:0000250" key="2">
    <source>
        <dbReference type="UniProtKB" id="Q12441"/>
    </source>
</evidence>
<evidence type="ECO:0000256" key="3">
    <source>
        <dbReference type="SAM" id="MobiDB-lite"/>
    </source>
</evidence>
<evidence type="ECO:0000269" key="4">
    <source>
    </source>
</evidence>
<accession>P0CX76</accession>
<accession>D6VWK0</accession>
<accession>P47097</accession>
<accession>Q66R50</accession>
<dbReference type="EMBL" id="Z48430">
    <property type="protein sequence ID" value="CAA88329.1"/>
    <property type="molecule type" value="Genomic_DNA"/>
</dbReference>
<dbReference type="EMBL" id="BK006946">
    <property type="protein sequence ID" value="DAA09860.1"/>
    <property type="molecule type" value="Genomic_DNA"/>
</dbReference>
<dbReference type="PIR" id="S57044">
    <property type="entry name" value="S57044"/>
</dbReference>
<dbReference type="RefSeq" id="NP_012561.3">
    <molecule id="P0CX76-1"/>
    <property type="nucleotide sequence ID" value="NM_001181684.3"/>
</dbReference>
<dbReference type="RefSeq" id="NP_013673.1">
    <molecule id="P0CX76-1"/>
    <property type="nucleotide sequence ID" value="NM_001182398.1"/>
</dbReference>
<dbReference type="RefSeq" id="NP_058172.1">
    <molecule id="P0CX76-1"/>
    <property type="nucleotide sequence ID" value="NM_001184407.1"/>
</dbReference>
<dbReference type="SMR" id="P0CX76"/>
<dbReference type="BioGRID" id="31496">
    <property type="interactions" value="4"/>
</dbReference>
<dbReference type="BioGRID" id="33779">
    <property type="interactions" value="8"/>
</dbReference>
<dbReference type="BioGRID" id="35130">
    <property type="interactions" value="5"/>
</dbReference>
<dbReference type="FunCoup" id="P0CX76">
    <property type="interactions" value="60"/>
</dbReference>
<dbReference type="GlyGen" id="P0CX76">
    <property type="glycosylation" value="2 sites"/>
</dbReference>
<dbReference type="iPTMnet" id="P0CX76"/>
<dbReference type="GeneID" id="854968"/>
<dbReference type="KEGG" id="sce:YJR026W"/>
<dbReference type="KEGG" id="sce:YLR227W-A"/>
<dbReference type="KEGG" id="sce:YML040W"/>
<dbReference type="AGR" id="SGD:S000004504"/>
<dbReference type="SGD" id="S000004504">
    <property type="gene designation" value="YML040W"/>
</dbReference>
<dbReference type="VEuPathDB" id="FungiDB:YJR026W"/>
<dbReference type="VEuPathDB" id="FungiDB:YLR227W-A"/>
<dbReference type="VEuPathDB" id="FungiDB:YML040W"/>
<dbReference type="HOGENOM" id="CLU_045291_1_0_1"/>
<dbReference type="InParanoid" id="P0CX76"/>
<dbReference type="OrthoDB" id="5423336at2759"/>
<dbReference type="Proteomes" id="UP000002311">
    <property type="component" value="Chromosome XIII"/>
</dbReference>
<dbReference type="RNAct" id="P0CX76">
    <property type="molecule type" value="protein"/>
</dbReference>
<dbReference type="GO" id="GO:0005737">
    <property type="term" value="C:cytoplasm"/>
    <property type="evidence" value="ECO:0007669"/>
    <property type="project" value="UniProtKB-SubCell"/>
</dbReference>
<dbReference type="GO" id="GO:0003723">
    <property type="term" value="F:RNA binding"/>
    <property type="evidence" value="ECO:0007669"/>
    <property type="project" value="UniProtKB-KW"/>
</dbReference>
<dbReference type="GO" id="GO:0075523">
    <property type="term" value="P:viral translational frameshifting"/>
    <property type="evidence" value="ECO:0007669"/>
    <property type="project" value="UniProtKB-KW"/>
</dbReference>
<dbReference type="InterPro" id="IPR015820">
    <property type="entry name" value="TYA"/>
</dbReference>
<dbReference type="Pfam" id="PF01021">
    <property type="entry name" value="TYA"/>
    <property type="match status" value="1"/>
</dbReference>
<keyword id="KW-0963">Cytoplasm</keyword>
<keyword id="KW-0597">Phosphoprotein</keyword>
<keyword id="KW-1185">Reference proteome</keyword>
<keyword id="KW-0688">Ribosomal frameshifting</keyword>
<keyword id="KW-0694">RNA-binding</keyword>
<keyword id="KW-0814">Transposable element</keyword>
<reference key="1">
    <citation type="journal article" date="1997" name="Nature">
        <title>The nucleotide sequence of Saccharomyces cerevisiae chromosome XIII.</title>
        <authorList>
            <person name="Bowman S."/>
            <person name="Churcher C.M."/>
            <person name="Badcock K."/>
            <person name="Brown D."/>
            <person name="Chillingworth T."/>
            <person name="Connor R."/>
            <person name="Dedman K."/>
            <person name="Devlin K."/>
            <person name="Gentles S."/>
            <person name="Hamlin N."/>
            <person name="Hunt S."/>
            <person name="Jagels K."/>
            <person name="Lye G."/>
            <person name="Moule S."/>
            <person name="Odell C."/>
            <person name="Pearson D."/>
            <person name="Rajandream M.A."/>
            <person name="Rice P."/>
            <person name="Skelton J."/>
            <person name="Walsh S.V."/>
            <person name="Whitehead S."/>
            <person name="Barrell B.G."/>
        </authorList>
    </citation>
    <scope>NUCLEOTIDE SEQUENCE [LARGE SCALE GENOMIC DNA]</scope>
    <source>
        <strain>ATCC 204508 / S288c</strain>
    </source>
</reference>
<reference key="2">
    <citation type="journal article" date="2014" name="G3 (Bethesda)">
        <title>The reference genome sequence of Saccharomyces cerevisiae: Then and now.</title>
        <authorList>
            <person name="Engel S.R."/>
            <person name="Dietrich F.S."/>
            <person name="Fisk D.G."/>
            <person name="Binkley G."/>
            <person name="Balakrishnan R."/>
            <person name="Costanzo M.C."/>
            <person name="Dwight S.S."/>
            <person name="Hitz B.C."/>
            <person name="Karra K."/>
            <person name="Nash R.S."/>
            <person name="Weng S."/>
            <person name="Wong E.D."/>
            <person name="Lloyd P."/>
            <person name="Skrzypek M.S."/>
            <person name="Miyasato S.R."/>
            <person name="Simison M."/>
            <person name="Cherry J.M."/>
        </authorList>
    </citation>
    <scope>GENOME REANNOTATION</scope>
    <source>
        <strain>ATCC 204508 / S288c</strain>
    </source>
</reference>
<reference key="3">
    <citation type="journal article" date="1998" name="Genome Res.">
        <title>Transposable elements and genome organization: a comprehensive survey of retrotransposons revealed by the complete Saccharomyces cerevisiae genome sequence.</title>
        <authorList>
            <person name="Kim J.M."/>
            <person name="Vanguri S."/>
            <person name="Boeke J.D."/>
            <person name="Gabriel A."/>
            <person name="Voytas D.F."/>
        </authorList>
    </citation>
    <scope>NOMENCLATURE</scope>
</reference>
<reference key="4">
    <citation type="journal article" date="2002" name="Mol. Cell. Biol.">
        <title>Differential effects of chromatin and Gcn4 on the 50-fold range of expression among individual yeast Ty1 retrotransposons.</title>
        <authorList>
            <person name="Morillon A."/>
            <person name="Benard L."/>
            <person name="Springer M."/>
            <person name="Lesage P."/>
        </authorList>
    </citation>
    <scope>INDUCTION</scope>
</reference>
<reference key="5">
    <citation type="journal article" date="2005" name="Cytogenet. Genome Res.">
        <title>Happy together: the life and times of Ty retrotransposons and their hosts.</title>
        <authorList>
            <person name="Lesage P."/>
            <person name="Todeschini A.L."/>
        </authorList>
    </citation>
    <scope>REVIEW</scope>
</reference>
<comment type="function">
    <text evidence="1">Capsid protein (CA) is the structural component of the virus-like particle (VLP), forming the shell that encapsulates the retrotransposons dimeric RNA genome. The particles are assembled from trimer-clustered units and there are holes in the capsid shells that allow for the diffusion of macromolecules. CA also has nucleocapsid-like chaperone activity, promoting primer tRNA(i)-Met annealing to the multipartite primer-binding site (PBS), dimerization of Ty1 RNA and initiation of reverse transcription (By similarity).</text>
</comment>
<comment type="subunit">
    <text evidence="1">Homotrimer.</text>
</comment>
<comment type="subcellular location">
    <subcellularLocation>
        <location evidence="1">Cytoplasm</location>
    </subcellularLocation>
</comment>
<comment type="alternative products">
    <event type="ribosomal frameshifting"/>
    <isoform>
        <id>P0CX76-1</id>
        <name>Transposon Ty1-ML2 Gag polyprotein</name>
        <sequence type="displayed"/>
    </isoform>
    <isoform>
        <id>Q03434-1</id>
        <name>Transposon Ty1-ML2 Gag-Pol polyprotein</name>
        <sequence type="external"/>
    </isoform>
    <text evidence="1">The Gag-Pol polyprotein is generated by a +1 ribosomal frameshift. The ratio of Gag:Gag-Pol varies between 20:1 and 5:1 (By similarity).</text>
</comment>
<comment type="induction">
    <text evidence="4">Ty1-ML2 is a highly expressed element. Induced under amino acid starvation conditions by GCN4.</text>
</comment>
<comment type="domain">
    <text evidence="1">The C-terminal RNA-binding region of CA is sufficient for all its nucleocapsid-like chaperone activities.</text>
</comment>
<comment type="miscellaneous">
    <text>Retrotransposons are mobile genetic entities that are able to replicate via an RNA intermediate and a reverse transcription step. In contrast to retroviruses, retrotransposons are non-infectious, lack an envelope and remain intracellular. Ty1 retrotransposons belong to the copia elements (pseudoviridae).</text>
</comment>
<comment type="miscellaneous">
    <molecule>Isoform Transposon Ty1-ML2 Gag polyprotein</molecule>
    <text>Produced by conventional translation.</text>
</comment>
<gene>
    <name type="primary">TY1A-ML2</name>
    <name type="synonym">YMLWTy1-2 GAG</name>
    <name type="ordered locus">YML040W</name>
    <name type="ORF">YM8054.03</name>
</gene>
<protein>
    <recommendedName>
        <fullName>Transposon Ty1-ML2 Gag polyprotein</fullName>
    </recommendedName>
    <alternativeName>
        <fullName>Gag-p49</fullName>
    </alternativeName>
    <alternativeName>
        <fullName>Transposon Ty1 protein A</fullName>
        <shortName>TY1A</shortName>
        <shortName>TYA</shortName>
    </alternativeName>
    <alternativeName>
        <fullName>p58</fullName>
    </alternativeName>
    <component>
        <recommendedName>
            <fullName>Capsid protein</fullName>
            <shortName>CA</shortName>
        </recommendedName>
        <alternativeName>
            <fullName>Gag-p45</fullName>
        </alternativeName>
        <alternativeName>
            <fullName>p54</fullName>
        </alternativeName>
    </component>
    <component>
        <recommendedName>
            <fullName>Gag-p4</fullName>
        </recommendedName>
    </component>
</protein>
<name>YM12A_YEAST</name>
<feature type="chain" id="PRO_0000409803" description="Transposon Ty1-ML2 Gag polyprotein">
    <location>
        <begin position="1"/>
        <end position="440"/>
    </location>
</feature>
<feature type="chain" id="PRO_0000409804" description="Capsid protein" evidence="1">
    <location>
        <begin position="1"/>
        <end position="401"/>
    </location>
</feature>
<feature type="peptide" id="PRO_0000409805" description="Gag-p4" evidence="1">
    <location>
        <begin position="402"/>
        <end position="440"/>
    </location>
</feature>
<feature type="region of interest" description="Disordered" evidence="3">
    <location>
        <begin position="1"/>
        <end position="93"/>
    </location>
</feature>
<feature type="region of interest" description="Disordered" evidence="3">
    <location>
        <begin position="126"/>
        <end position="173"/>
    </location>
</feature>
<feature type="region of interest" description="RNA-binding" evidence="1">
    <location>
        <begin position="299"/>
        <end position="401"/>
    </location>
</feature>
<feature type="region of interest" description="Disordered" evidence="3">
    <location>
        <begin position="352"/>
        <end position="440"/>
    </location>
</feature>
<feature type="compositionally biased region" description="Low complexity" evidence="3">
    <location>
        <begin position="1"/>
        <end position="16"/>
    </location>
</feature>
<feature type="compositionally biased region" description="Polar residues" evidence="3">
    <location>
        <begin position="48"/>
        <end position="60"/>
    </location>
</feature>
<feature type="compositionally biased region" description="Polar residues" evidence="3">
    <location>
        <begin position="127"/>
        <end position="152"/>
    </location>
</feature>
<feature type="compositionally biased region" description="Low complexity" evidence="3">
    <location>
        <begin position="153"/>
        <end position="165"/>
    </location>
</feature>
<feature type="compositionally biased region" description="Low complexity" evidence="3">
    <location>
        <begin position="402"/>
        <end position="418"/>
    </location>
</feature>
<feature type="compositionally biased region" description="Polar residues" evidence="3">
    <location>
        <begin position="419"/>
        <end position="428"/>
    </location>
</feature>
<feature type="compositionally biased region" description="Basic and acidic residues" evidence="3">
    <location>
        <begin position="429"/>
        <end position="440"/>
    </location>
</feature>
<feature type="site" description="Cleavage; by Ty1 protease" evidence="1">
    <location>
        <begin position="401"/>
        <end position="402"/>
    </location>
</feature>
<feature type="modified residue" description="Phosphoserine" evidence="2">
    <location>
        <position position="416"/>
    </location>
</feature>
<proteinExistence type="evidence at transcript level"/>